<reference key="1">
    <citation type="journal article" date="2004" name="Nat. Genet.">
        <title>Comparison of genome degradation in Paratyphi A and Typhi, human-restricted serovars of Salmonella enterica that cause typhoid.</title>
        <authorList>
            <person name="McClelland M."/>
            <person name="Sanderson K.E."/>
            <person name="Clifton S.W."/>
            <person name="Latreille P."/>
            <person name="Porwollik S."/>
            <person name="Sabo A."/>
            <person name="Meyer R."/>
            <person name="Bieri T."/>
            <person name="Ozersky P."/>
            <person name="McLellan M."/>
            <person name="Harkins C.R."/>
            <person name="Wang C."/>
            <person name="Nguyen C."/>
            <person name="Berghoff A."/>
            <person name="Elliott G."/>
            <person name="Kohlberg S."/>
            <person name="Strong C."/>
            <person name="Du F."/>
            <person name="Carter J."/>
            <person name="Kremizki C."/>
            <person name="Layman D."/>
            <person name="Leonard S."/>
            <person name="Sun H."/>
            <person name="Fulton L."/>
            <person name="Nash W."/>
            <person name="Miner T."/>
            <person name="Minx P."/>
            <person name="Delehaunty K."/>
            <person name="Fronick C."/>
            <person name="Magrini V."/>
            <person name="Nhan M."/>
            <person name="Warren W."/>
            <person name="Florea L."/>
            <person name="Spieth J."/>
            <person name="Wilson R.K."/>
        </authorList>
    </citation>
    <scope>NUCLEOTIDE SEQUENCE [LARGE SCALE GENOMIC DNA]</scope>
    <source>
        <strain>ATCC 9150 / SARB42</strain>
    </source>
</reference>
<gene>
    <name evidence="1" type="primary">mdoD</name>
    <name evidence="1" type="synonym">opgD</name>
    <name type="ordered locus">SPA1247</name>
</gene>
<evidence type="ECO:0000255" key="1">
    <source>
        <dbReference type="HAMAP-Rule" id="MF_01068"/>
    </source>
</evidence>
<accession>Q5PHT4</accession>
<sequence>MNRRRFIKGSMAMAAVCGSSGIASLFSQAAFAAESDIADGKIVRFDFAGLQSMAQALAKKPWGGAPGPLPDTLANLTPQAYNSIQYDAAHSLWNGVANRQLDIQFFHVGMGFRRRVRMFSVDTTTHLAREIHFRPELFKYNDAGVDTTQLEGQSDLGFAGFRVFKAPELARRDVVSFLGASYFRAVDDTYQYGLSARGLAIDTYTDGQEEFPDFTAFWFDTAKPGDTTFTVYALLDSASVTGAYKFVIHCEKTQVIMDVENHLYARKDIKQLGIAPMTSMFSCGNNERRVCDTIHPQIHDSDRLAMWRGNGEWICRPLNNPQKLQFNAYMDDNPKGFGLLQLDRDFSHYQDVMDWYNKRPSLWVEPRSKWGKGAVSLMEIPTTGETLDNVVCFWQPEKAIKAGDTLVFNYRLYWSAQPPVQSPLARVMATRTGMGGFPEGWAPGEHYPDKWARRFAIDFVGGDLKAAAPKSIEPVITLSSGEAKQVEILYVEPFDGYRIQFDWYPTSDSTAPVDMRMFLRCQGEAISETWLYQYFPPAPDKRRYVDDRIMR</sequence>
<name>OPGD_SALPA</name>
<protein>
    <recommendedName>
        <fullName evidence="1">Glucans biosynthesis protein D</fullName>
    </recommendedName>
</protein>
<comment type="function">
    <text evidence="1">Probably involved in the control of the structural glucose backbone of osmoregulated periplasmic glucans (OPGs).</text>
</comment>
<comment type="pathway">
    <text evidence="1">Glycan metabolism; osmoregulated periplasmic glucan (OPG) biosynthesis.</text>
</comment>
<comment type="subcellular location">
    <subcellularLocation>
        <location evidence="1">Periplasm</location>
    </subcellularLocation>
</comment>
<comment type="PTM">
    <text>Predicted to be exported by the Tat system. The position of the signal peptide cleavage has not been experimentally proven.</text>
</comment>
<comment type="similarity">
    <text evidence="1">Belongs to the OpgD/OpgG family.</text>
</comment>
<proteinExistence type="inferred from homology"/>
<feature type="signal peptide" description="Tat-type signal" evidence="1">
    <location>
        <begin position="1"/>
        <end position="32"/>
    </location>
</feature>
<feature type="chain" id="PRO_1000064551" description="Glucans biosynthesis protein D">
    <location>
        <begin position="33"/>
        <end position="551"/>
    </location>
</feature>
<keyword id="KW-0574">Periplasm</keyword>
<keyword id="KW-0732">Signal</keyword>
<dbReference type="EMBL" id="CP000026">
    <property type="protein sequence ID" value="AAV77198.1"/>
    <property type="molecule type" value="Genomic_DNA"/>
</dbReference>
<dbReference type="RefSeq" id="WP_001081950.1">
    <property type="nucleotide sequence ID" value="NC_006511.1"/>
</dbReference>
<dbReference type="SMR" id="Q5PHT4"/>
<dbReference type="KEGG" id="spt:SPA1247"/>
<dbReference type="HOGENOM" id="CLU_023403_2_0_6"/>
<dbReference type="UniPathway" id="UPA00637"/>
<dbReference type="Proteomes" id="UP000008185">
    <property type="component" value="Chromosome"/>
</dbReference>
<dbReference type="GO" id="GO:0030288">
    <property type="term" value="C:outer membrane-bounded periplasmic space"/>
    <property type="evidence" value="ECO:0007669"/>
    <property type="project" value="TreeGrafter"/>
</dbReference>
<dbReference type="GO" id="GO:0030246">
    <property type="term" value="F:carbohydrate binding"/>
    <property type="evidence" value="ECO:0007669"/>
    <property type="project" value="InterPro"/>
</dbReference>
<dbReference type="GO" id="GO:0003824">
    <property type="term" value="F:catalytic activity"/>
    <property type="evidence" value="ECO:0007669"/>
    <property type="project" value="InterPro"/>
</dbReference>
<dbReference type="GO" id="GO:0051274">
    <property type="term" value="P:beta-glucan biosynthetic process"/>
    <property type="evidence" value="ECO:0007669"/>
    <property type="project" value="TreeGrafter"/>
</dbReference>
<dbReference type="FunFam" id="2.60.40.10:FF:000379">
    <property type="entry name" value="Glucans biosynthesis protein D"/>
    <property type="match status" value="1"/>
</dbReference>
<dbReference type="Gene3D" id="2.70.98.10">
    <property type="match status" value="1"/>
</dbReference>
<dbReference type="Gene3D" id="2.60.40.10">
    <property type="entry name" value="Immunoglobulins"/>
    <property type="match status" value="1"/>
</dbReference>
<dbReference type="HAMAP" id="MF_01068">
    <property type="entry name" value="MdoD_OpgD"/>
    <property type="match status" value="1"/>
</dbReference>
<dbReference type="InterPro" id="IPR011013">
    <property type="entry name" value="Gal_mutarotase_sf_dom"/>
</dbReference>
<dbReference type="InterPro" id="IPR014718">
    <property type="entry name" value="GH-type_carb-bd"/>
</dbReference>
<dbReference type="InterPro" id="IPR023724">
    <property type="entry name" value="Glucan_biosyn_MdoD"/>
</dbReference>
<dbReference type="InterPro" id="IPR014438">
    <property type="entry name" value="Glucan_biosyn_MdoG/MdoD"/>
</dbReference>
<dbReference type="InterPro" id="IPR007444">
    <property type="entry name" value="Glucan_biosyn_MdoG_C"/>
</dbReference>
<dbReference type="InterPro" id="IPR013783">
    <property type="entry name" value="Ig-like_fold"/>
</dbReference>
<dbReference type="InterPro" id="IPR014756">
    <property type="entry name" value="Ig_E-set"/>
</dbReference>
<dbReference type="InterPro" id="IPR006311">
    <property type="entry name" value="TAT_signal"/>
</dbReference>
<dbReference type="InterPro" id="IPR019546">
    <property type="entry name" value="TAT_signal_bac_arc"/>
</dbReference>
<dbReference type="NCBIfam" id="TIGR01409">
    <property type="entry name" value="TAT_signal_seq"/>
    <property type="match status" value="1"/>
</dbReference>
<dbReference type="PANTHER" id="PTHR30504">
    <property type="entry name" value="GLUCANS BIOSYNTHESIS PROTEIN"/>
    <property type="match status" value="1"/>
</dbReference>
<dbReference type="PANTHER" id="PTHR30504:SF3">
    <property type="entry name" value="GLUCANS BIOSYNTHESIS PROTEIN D"/>
    <property type="match status" value="1"/>
</dbReference>
<dbReference type="Pfam" id="PF04349">
    <property type="entry name" value="MdoG"/>
    <property type="match status" value="1"/>
</dbReference>
<dbReference type="PIRSF" id="PIRSF006281">
    <property type="entry name" value="MdoG"/>
    <property type="match status" value="1"/>
</dbReference>
<dbReference type="SUPFAM" id="SSF81296">
    <property type="entry name" value="E set domains"/>
    <property type="match status" value="1"/>
</dbReference>
<dbReference type="SUPFAM" id="SSF74650">
    <property type="entry name" value="Galactose mutarotase-like"/>
    <property type="match status" value="1"/>
</dbReference>
<dbReference type="PROSITE" id="PS51318">
    <property type="entry name" value="TAT"/>
    <property type="match status" value="1"/>
</dbReference>
<organism>
    <name type="scientific">Salmonella paratyphi A (strain ATCC 9150 / SARB42)</name>
    <dbReference type="NCBI Taxonomy" id="295319"/>
    <lineage>
        <taxon>Bacteria</taxon>
        <taxon>Pseudomonadati</taxon>
        <taxon>Pseudomonadota</taxon>
        <taxon>Gammaproteobacteria</taxon>
        <taxon>Enterobacterales</taxon>
        <taxon>Enterobacteriaceae</taxon>
        <taxon>Salmonella</taxon>
    </lineage>
</organism>